<evidence type="ECO:0000255" key="1">
    <source>
        <dbReference type="HAMAP-Rule" id="MF_01039"/>
    </source>
</evidence>
<feature type="chain" id="PRO_0000229151" description="2,3-bisphosphoglycerate-dependent phosphoglycerate mutase">
    <location>
        <begin position="1"/>
        <end position="249"/>
    </location>
</feature>
<feature type="active site" description="Tele-phosphohistidine intermediate" evidence="1">
    <location>
        <position position="10"/>
    </location>
</feature>
<feature type="active site" description="Proton donor/acceptor" evidence="1">
    <location>
        <position position="88"/>
    </location>
</feature>
<feature type="binding site" evidence="1">
    <location>
        <begin position="9"/>
        <end position="16"/>
    </location>
    <ligand>
        <name>substrate</name>
    </ligand>
</feature>
<feature type="binding site" evidence="1">
    <location>
        <begin position="22"/>
        <end position="23"/>
    </location>
    <ligand>
        <name>substrate</name>
    </ligand>
</feature>
<feature type="binding site" evidence="1">
    <location>
        <position position="61"/>
    </location>
    <ligand>
        <name>substrate</name>
    </ligand>
</feature>
<feature type="binding site" evidence="1">
    <location>
        <begin position="88"/>
        <end position="91"/>
    </location>
    <ligand>
        <name>substrate</name>
    </ligand>
</feature>
<feature type="binding site" evidence="1">
    <location>
        <position position="99"/>
    </location>
    <ligand>
        <name>substrate</name>
    </ligand>
</feature>
<feature type="binding site" evidence="1">
    <location>
        <begin position="115"/>
        <end position="116"/>
    </location>
    <ligand>
        <name>substrate</name>
    </ligand>
</feature>
<feature type="binding site" evidence="1">
    <location>
        <begin position="184"/>
        <end position="185"/>
    </location>
    <ligand>
        <name>substrate</name>
    </ligand>
</feature>
<feature type="site" description="Transition state stabilizer" evidence="1">
    <location>
        <position position="183"/>
    </location>
</feature>
<comment type="function">
    <text evidence="1">Catalyzes the interconversion of 2-phosphoglycerate and 3-phosphoglycerate.</text>
</comment>
<comment type="catalytic activity">
    <reaction evidence="1">
        <text>(2R)-2-phosphoglycerate = (2R)-3-phosphoglycerate</text>
        <dbReference type="Rhea" id="RHEA:15901"/>
        <dbReference type="ChEBI" id="CHEBI:58272"/>
        <dbReference type="ChEBI" id="CHEBI:58289"/>
        <dbReference type="EC" id="5.4.2.11"/>
    </reaction>
</comment>
<comment type="pathway">
    <text evidence="1">Carbohydrate degradation; glycolysis; pyruvate from D-glyceraldehyde 3-phosphate: step 3/5.</text>
</comment>
<comment type="subunit">
    <text evidence="1">Homodimer.</text>
</comment>
<comment type="similarity">
    <text evidence="1">Belongs to the phosphoglycerate mutase family. BPG-dependent PGAM subfamily.</text>
</comment>
<keyword id="KW-0312">Gluconeogenesis</keyword>
<keyword id="KW-0324">Glycolysis</keyword>
<keyword id="KW-0413">Isomerase</keyword>
<proteinExistence type="inferred from homology"/>
<gene>
    <name evidence="1" type="primary">gpmA</name>
    <name type="ordered locus">XOO1362</name>
</gene>
<sequence length="249" mass="27986">MTRKLVLLRHGQSQWNLDNRFTGWVDVELTDQGRQEAVAAGKLMKDEGLQFDVAHTSVLKRAIHTLQGALKELDQDWLPVSKSWRLNERHYGGLQGLDKAETAAKHGEEQVKIWRRSYDIPPPAMDVDDPGHPCHDRRYATLDRNALPGTESLATTLVRVLPYWHDAIAPQLKAGQTVLVTAHGNSLRALYKYLNDVSNEQILELNIPTGIPLLFELDDNLQVRSFRYLGDPEAAKRAAEAVANQGKAK</sequence>
<organism>
    <name type="scientific">Xanthomonas oryzae pv. oryzae (strain MAFF 311018)</name>
    <dbReference type="NCBI Taxonomy" id="342109"/>
    <lineage>
        <taxon>Bacteria</taxon>
        <taxon>Pseudomonadati</taxon>
        <taxon>Pseudomonadota</taxon>
        <taxon>Gammaproteobacteria</taxon>
        <taxon>Lysobacterales</taxon>
        <taxon>Lysobacteraceae</taxon>
        <taxon>Xanthomonas</taxon>
    </lineage>
</organism>
<protein>
    <recommendedName>
        <fullName evidence="1">2,3-bisphosphoglycerate-dependent phosphoglycerate mutase</fullName>
        <shortName evidence="1">BPG-dependent PGAM</shortName>
        <shortName evidence="1">PGAM</shortName>
        <shortName evidence="1">Phosphoglyceromutase</shortName>
        <shortName evidence="1">dPGM</shortName>
        <ecNumber evidence="1">5.4.2.11</ecNumber>
    </recommendedName>
</protein>
<accession>Q2P5R0</accession>
<reference key="1">
    <citation type="journal article" date="2005" name="Jpn. Agric. Res. Q.">
        <title>Genome sequence of Xanthomonas oryzae pv. oryzae suggests contribution of large numbers of effector genes and insertion sequences to its race diversity.</title>
        <authorList>
            <person name="Ochiai H."/>
            <person name="Inoue Y."/>
            <person name="Takeya M."/>
            <person name="Sasaki A."/>
            <person name="Kaku H."/>
        </authorList>
    </citation>
    <scope>NUCLEOTIDE SEQUENCE [LARGE SCALE GENOMIC DNA]</scope>
    <source>
        <strain>MAFF 311018</strain>
    </source>
</reference>
<dbReference type="EC" id="5.4.2.11" evidence="1"/>
<dbReference type="EMBL" id="AP008229">
    <property type="protein sequence ID" value="BAE68117.1"/>
    <property type="molecule type" value="Genomic_DNA"/>
</dbReference>
<dbReference type="RefSeq" id="WP_011258259.1">
    <property type="nucleotide sequence ID" value="NC_007705.1"/>
</dbReference>
<dbReference type="SMR" id="Q2P5R0"/>
<dbReference type="GeneID" id="77338255"/>
<dbReference type="KEGG" id="xom:XOO1362"/>
<dbReference type="HOGENOM" id="CLU_033323_1_1_6"/>
<dbReference type="UniPathway" id="UPA00109">
    <property type="reaction ID" value="UER00186"/>
</dbReference>
<dbReference type="GO" id="GO:0004619">
    <property type="term" value="F:phosphoglycerate mutase activity"/>
    <property type="evidence" value="ECO:0007669"/>
    <property type="project" value="UniProtKB-EC"/>
</dbReference>
<dbReference type="GO" id="GO:0006094">
    <property type="term" value="P:gluconeogenesis"/>
    <property type="evidence" value="ECO:0007669"/>
    <property type="project" value="UniProtKB-UniRule"/>
</dbReference>
<dbReference type="GO" id="GO:0006096">
    <property type="term" value="P:glycolytic process"/>
    <property type="evidence" value="ECO:0007669"/>
    <property type="project" value="UniProtKB-UniRule"/>
</dbReference>
<dbReference type="CDD" id="cd07067">
    <property type="entry name" value="HP_PGM_like"/>
    <property type="match status" value="1"/>
</dbReference>
<dbReference type="FunFam" id="3.40.50.1240:FF:000003">
    <property type="entry name" value="2,3-bisphosphoglycerate-dependent phosphoglycerate mutase"/>
    <property type="match status" value="1"/>
</dbReference>
<dbReference type="Gene3D" id="3.40.50.1240">
    <property type="entry name" value="Phosphoglycerate mutase-like"/>
    <property type="match status" value="1"/>
</dbReference>
<dbReference type="HAMAP" id="MF_01039">
    <property type="entry name" value="PGAM_GpmA"/>
    <property type="match status" value="1"/>
</dbReference>
<dbReference type="InterPro" id="IPR013078">
    <property type="entry name" value="His_Pase_superF_clade-1"/>
</dbReference>
<dbReference type="InterPro" id="IPR029033">
    <property type="entry name" value="His_PPase_superfam"/>
</dbReference>
<dbReference type="InterPro" id="IPR001345">
    <property type="entry name" value="PG/BPGM_mutase_AS"/>
</dbReference>
<dbReference type="InterPro" id="IPR005952">
    <property type="entry name" value="Phosphogly_mut1"/>
</dbReference>
<dbReference type="NCBIfam" id="TIGR01258">
    <property type="entry name" value="pgm_1"/>
    <property type="match status" value="1"/>
</dbReference>
<dbReference type="NCBIfam" id="NF010713">
    <property type="entry name" value="PRK14115.1"/>
    <property type="match status" value="1"/>
</dbReference>
<dbReference type="PANTHER" id="PTHR11931">
    <property type="entry name" value="PHOSPHOGLYCERATE MUTASE"/>
    <property type="match status" value="1"/>
</dbReference>
<dbReference type="Pfam" id="PF00300">
    <property type="entry name" value="His_Phos_1"/>
    <property type="match status" value="2"/>
</dbReference>
<dbReference type="PIRSF" id="PIRSF000709">
    <property type="entry name" value="6PFK_2-Ptase"/>
    <property type="match status" value="1"/>
</dbReference>
<dbReference type="SMART" id="SM00855">
    <property type="entry name" value="PGAM"/>
    <property type="match status" value="1"/>
</dbReference>
<dbReference type="SUPFAM" id="SSF53254">
    <property type="entry name" value="Phosphoglycerate mutase-like"/>
    <property type="match status" value="1"/>
</dbReference>
<dbReference type="PROSITE" id="PS00175">
    <property type="entry name" value="PG_MUTASE"/>
    <property type="match status" value="1"/>
</dbReference>
<name>GPMA_XANOM</name>